<dbReference type="EC" id="2.1.1.-" evidence="3"/>
<dbReference type="EMBL" id="BX855615">
    <property type="status" value="NOT_ANNOTATED_CDS"/>
    <property type="molecule type" value="Genomic_DNA"/>
</dbReference>
<dbReference type="EMBL" id="BC055201">
    <property type="protein sequence ID" value="AAH55201.1"/>
    <property type="molecule type" value="mRNA"/>
</dbReference>
<dbReference type="RefSeq" id="NP_998575.1">
    <property type="nucleotide sequence ID" value="NM_213410.1"/>
</dbReference>
<dbReference type="RefSeq" id="XP_005156867.1">
    <property type="nucleotide sequence ID" value="XM_005156810.3"/>
</dbReference>
<dbReference type="PaxDb" id="7955-ENSDARP00000036087"/>
<dbReference type="Ensembl" id="ENSDART00000030946">
    <property type="protein sequence ID" value="ENSDARP00000036087"/>
    <property type="gene ID" value="ENSDARG00000025017"/>
</dbReference>
<dbReference type="GeneID" id="406719"/>
<dbReference type="KEGG" id="dre:406719"/>
<dbReference type="AGR" id="ZFIN:ZDB-GENE-040426-2747"/>
<dbReference type="CTD" id="118738"/>
<dbReference type="ZFIN" id="ZDB-GENE-040426-2747">
    <property type="gene designation" value="znf488"/>
</dbReference>
<dbReference type="eggNOG" id="KOG1721">
    <property type="taxonomic scope" value="Eukaryota"/>
</dbReference>
<dbReference type="eggNOG" id="KOG2461">
    <property type="taxonomic scope" value="Eukaryota"/>
</dbReference>
<dbReference type="HOGENOM" id="CLU_034617_1_0_1"/>
<dbReference type="OMA" id="EELKCGR"/>
<dbReference type="OrthoDB" id="5814089at2759"/>
<dbReference type="PhylomeDB" id="Q7SXY1"/>
<dbReference type="TreeFam" id="TF327090"/>
<dbReference type="Proteomes" id="UP000000437">
    <property type="component" value="Chromosome 13"/>
</dbReference>
<dbReference type="Bgee" id="ENSDARG00000025017">
    <property type="expression patterns" value="Expressed in spinal cord and 15 other cell types or tissues"/>
</dbReference>
<dbReference type="GO" id="GO:0005634">
    <property type="term" value="C:nucleus"/>
    <property type="evidence" value="ECO:0000318"/>
    <property type="project" value="GO_Central"/>
</dbReference>
<dbReference type="GO" id="GO:0003677">
    <property type="term" value="F:DNA binding"/>
    <property type="evidence" value="ECO:0007669"/>
    <property type="project" value="UniProtKB-KW"/>
</dbReference>
<dbReference type="GO" id="GO:0008168">
    <property type="term" value="F:methyltransferase activity"/>
    <property type="evidence" value="ECO:0007669"/>
    <property type="project" value="UniProtKB-KW"/>
</dbReference>
<dbReference type="GO" id="GO:0008270">
    <property type="term" value="F:zinc ion binding"/>
    <property type="evidence" value="ECO:0007669"/>
    <property type="project" value="UniProtKB-KW"/>
</dbReference>
<dbReference type="GO" id="GO:0032259">
    <property type="term" value="P:methylation"/>
    <property type="evidence" value="ECO:0007669"/>
    <property type="project" value="UniProtKB-KW"/>
</dbReference>
<dbReference type="GO" id="GO:0014003">
    <property type="term" value="P:oligodendrocyte development"/>
    <property type="evidence" value="ECO:0000318"/>
    <property type="project" value="GO_Central"/>
</dbReference>
<dbReference type="GO" id="GO:0006355">
    <property type="term" value="P:regulation of DNA-templated transcription"/>
    <property type="evidence" value="ECO:0000318"/>
    <property type="project" value="GO_Central"/>
</dbReference>
<dbReference type="GO" id="GO:0021520">
    <property type="term" value="P:spinal cord motor neuron cell fate specification"/>
    <property type="evidence" value="ECO:0000315"/>
    <property type="project" value="ZFIN"/>
</dbReference>
<dbReference type="CDD" id="cd19192">
    <property type="entry name" value="PR-SET_PRDM8"/>
    <property type="match status" value="1"/>
</dbReference>
<dbReference type="Gene3D" id="3.30.160.60">
    <property type="entry name" value="Classic Zinc Finger"/>
    <property type="match status" value="1"/>
</dbReference>
<dbReference type="Gene3D" id="2.170.270.10">
    <property type="entry name" value="SET domain"/>
    <property type="match status" value="1"/>
</dbReference>
<dbReference type="InterPro" id="IPR044402">
    <property type="entry name" value="PRDM8-like_PR/SET"/>
</dbReference>
<dbReference type="InterPro" id="IPR001214">
    <property type="entry name" value="SET_dom"/>
</dbReference>
<dbReference type="InterPro" id="IPR046341">
    <property type="entry name" value="SET_dom_sf"/>
</dbReference>
<dbReference type="InterPro" id="IPR052296">
    <property type="entry name" value="TR-Histone_Methyltrans"/>
</dbReference>
<dbReference type="InterPro" id="IPR036236">
    <property type="entry name" value="Znf_C2H2_sf"/>
</dbReference>
<dbReference type="InterPro" id="IPR013087">
    <property type="entry name" value="Znf_C2H2_type"/>
</dbReference>
<dbReference type="PANTHER" id="PTHR16516">
    <property type="entry name" value="AGAP007109-PA"/>
    <property type="match status" value="1"/>
</dbReference>
<dbReference type="PANTHER" id="PTHR16516:SF5">
    <property type="entry name" value="ZINC FINGER PROTEIN 488"/>
    <property type="match status" value="1"/>
</dbReference>
<dbReference type="Pfam" id="PF21549">
    <property type="entry name" value="PRDM2_PR"/>
    <property type="match status" value="1"/>
</dbReference>
<dbReference type="SMART" id="SM00355">
    <property type="entry name" value="ZnF_C2H2"/>
    <property type="match status" value="3"/>
</dbReference>
<dbReference type="SUPFAM" id="SSF57667">
    <property type="entry name" value="beta-beta-alpha zinc fingers"/>
    <property type="match status" value="1"/>
</dbReference>
<dbReference type="SUPFAM" id="SSF82199">
    <property type="entry name" value="SET domain"/>
    <property type="match status" value="1"/>
</dbReference>
<dbReference type="PROSITE" id="PS50280">
    <property type="entry name" value="SET"/>
    <property type="match status" value="1"/>
</dbReference>
<dbReference type="PROSITE" id="PS00028">
    <property type="entry name" value="ZINC_FINGER_C2H2_1"/>
    <property type="match status" value="2"/>
</dbReference>
<dbReference type="PROSITE" id="PS50157">
    <property type="entry name" value="ZINC_FINGER_C2H2_2"/>
    <property type="match status" value="3"/>
</dbReference>
<feature type="chain" id="PRO_0000459996" description="Zinc finger protein 488">
    <location>
        <begin position="1"/>
        <end position="502"/>
    </location>
</feature>
<feature type="domain" description="SET" evidence="3">
    <location>
        <begin position="8"/>
        <end position="130"/>
    </location>
</feature>
<feature type="zinc finger region" description="C2H2-type 1; atypical" evidence="2">
    <location>
        <begin position="151"/>
        <end position="174"/>
    </location>
</feature>
<feature type="zinc finger region" description="C2H2-type 2" evidence="2">
    <location>
        <begin position="438"/>
        <end position="460"/>
    </location>
</feature>
<feature type="zinc finger region" description="C2H2-type 3" evidence="2">
    <location>
        <begin position="479"/>
        <end position="501"/>
    </location>
</feature>
<feature type="region of interest" description="Disordered" evidence="4">
    <location>
        <begin position="267"/>
        <end position="303"/>
    </location>
</feature>
<feature type="region of interest" description="Disordered" evidence="4">
    <location>
        <begin position="338"/>
        <end position="361"/>
    </location>
</feature>
<feature type="compositionally biased region" description="Polar residues" evidence="4">
    <location>
        <begin position="269"/>
        <end position="286"/>
    </location>
</feature>
<feature type="binding site" evidence="3">
    <location>
        <position position="129"/>
    </location>
    <ligand>
        <name>S-adenosyl-L-methionine</name>
        <dbReference type="ChEBI" id="CHEBI:59789"/>
    </ligand>
</feature>
<feature type="sequence conflict" description="In Ref. 2; AAH55201." evidence="6" ref="2">
    <original>TSSF</original>
    <variation>SSSS</variation>
    <location>
        <begin position="214"/>
        <end position="217"/>
    </location>
</feature>
<feature type="sequence conflict" description="In Ref. 2; AAH55201." evidence="6" ref="2">
    <original>S</original>
    <variation>P</variation>
    <location>
        <position position="296"/>
    </location>
</feature>
<feature type="sequence conflict" description="In Ref. 2; AAH55201." evidence="6" ref="2">
    <original>S</original>
    <variation>A</variation>
    <location>
        <position position="387"/>
    </location>
</feature>
<gene>
    <name evidence="9" type="primary">znf488</name>
    <name evidence="9" type="synonym">prdm8</name>
</gene>
<proteinExistence type="evidence at transcript level"/>
<organism evidence="7">
    <name type="scientific">Danio rerio</name>
    <name type="common">Zebrafish</name>
    <name type="synonym">Brachydanio rerio</name>
    <dbReference type="NCBI Taxonomy" id="7955"/>
    <lineage>
        <taxon>Eukaryota</taxon>
        <taxon>Metazoa</taxon>
        <taxon>Chordata</taxon>
        <taxon>Craniata</taxon>
        <taxon>Vertebrata</taxon>
        <taxon>Euteleostomi</taxon>
        <taxon>Actinopterygii</taxon>
        <taxon>Neopterygii</taxon>
        <taxon>Teleostei</taxon>
        <taxon>Ostariophysi</taxon>
        <taxon>Cypriniformes</taxon>
        <taxon>Danionidae</taxon>
        <taxon>Danioninae</taxon>
        <taxon>Danio</taxon>
    </lineage>
</organism>
<protein>
    <recommendedName>
        <fullName evidence="9">Zinc finger protein 488</fullName>
        <ecNumber evidence="3">2.1.1.-</ecNumber>
    </recommendedName>
</protein>
<accession>B8A5Y1</accession>
<accession>A0A8M2B2V3</accession>
<accession>Q7SXY1</accession>
<comment type="function">
    <text evidence="1 5 6">Transcriptional repressor (By similarity). May have histone methyltransferase activity (Probable). Negatively regulates shh signaling activity in pMN progenitor cells which prevents their switch from motor neuron to oligodendrocyte precursor cell production (PubMed:32680935). Independently of shh activity, also regulates oligodendrocyte formation (PubMed:32680935).</text>
</comment>
<comment type="subcellular location">
    <subcellularLocation>
        <location evidence="1">Nucleus</location>
    </subcellularLocation>
</comment>
<comment type="tissue specificity">
    <text evidence="5">Expressed in pMN progenitors and oligodendrocyte lineage cells in the embryo with expression declining in oligodendrocytes undergoing differentiation.</text>
</comment>
<comment type="similarity">
    <text evidence="6">Belongs to the krueppel C2H2-type zinc-finger protein family.</text>
</comment>
<comment type="caution">
    <text evidence="6">Was originally named prdm8 but the gene name was later changed to znf488 in recognition of the fact that it is an ortholog of mammalian ZNF488 as supported by synteny and phylogenetics. In non-mammalian gnathostomes, znf488 has an N-terminal SET domain and C-terminal zinc fingers similar to PRDM8 while mammalian ZNF488 has lost the N-terminal SET domain but retains the C-terminal zinc fingers.</text>
</comment>
<reference evidence="8" key="1">
    <citation type="journal article" date="2013" name="Nature">
        <title>The zebrafish reference genome sequence and its relationship to the human genome.</title>
        <authorList>
            <person name="Howe K."/>
            <person name="Clark M.D."/>
            <person name="Torroja C.F."/>
            <person name="Torrance J."/>
            <person name="Berthelot C."/>
            <person name="Muffato M."/>
            <person name="Collins J.E."/>
            <person name="Humphray S."/>
            <person name="McLaren K."/>
            <person name="Matthews L."/>
            <person name="McLaren S."/>
            <person name="Sealy I."/>
            <person name="Caccamo M."/>
            <person name="Churcher C."/>
            <person name="Scott C."/>
            <person name="Barrett J.C."/>
            <person name="Koch R."/>
            <person name="Rauch G.J."/>
            <person name="White S."/>
            <person name="Chow W."/>
            <person name="Kilian B."/>
            <person name="Quintais L.T."/>
            <person name="Guerra-Assuncao J.A."/>
            <person name="Zhou Y."/>
            <person name="Gu Y."/>
            <person name="Yen J."/>
            <person name="Vogel J.H."/>
            <person name="Eyre T."/>
            <person name="Redmond S."/>
            <person name="Banerjee R."/>
            <person name="Chi J."/>
            <person name="Fu B."/>
            <person name="Langley E."/>
            <person name="Maguire S.F."/>
            <person name="Laird G.K."/>
            <person name="Lloyd D."/>
            <person name="Kenyon E."/>
            <person name="Donaldson S."/>
            <person name="Sehra H."/>
            <person name="Almeida-King J."/>
            <person name="Loveland J."/>
            <person name="Trevanion S."/>
            <person name="Jones M."/>
            <person name="Quail M."/>
            <person name="Willey D."/>
            <person name="Hunt A."/>
            <person name="Burton J."/>
            <person name="Sims S."/>
            <person name="McLay K."/>
            <person name="Plumb B."/>
            <person name="Davis J."/>
            <person name="Clee C."/>
            <person name="Oliver K."/>
            <person name="Clark R."/>
            <person name="Riddle C."/>
            <person name="Elliot D."/>
            <person name="Threadgold G."/>
            <person name="Harden G."/>
            <person name="Ware D."/>
            <person name="Begum S."/>
            <person name="Mortimore B."/>
            <person name="Kerry G."/>
            <person name="Heath P."/>
            <person name="Phillimore B."/>
            <person name="Tracey A."/>
            <person name="Corby N."/>
            <person name="Dunn M."/>
            <person name="Johnson C."/>
            <person name="Wood J."/>
            <person name="Clark S."/>
            <person name="Pelan S."/>
            <person name="Griffiths G."/>
            <person name="Smith M."/>
            <person name="Glithero R."/>
            <person name="Howden P."/>
            <person name="Barker N."/>
            <person name="Lloyd C."/>
            <person name="Stevens C."/>
            <person name="Harley J."/>
            <person name="Holt K."/>
            <person name="Panagiotidis G."/>
            <person name="Lovell J."/>
            <person name="Beasley H."/>
            <person name="Henderson C."/>
            <person name="Gordon D."/>
            <person name="Auger K."/>
            <person name="Wright D."/>
            <person name="Collins J."/>
            <person name="Raisen C."/>
            <person name="Dyer L."/>
            <person name="Leung K."/>
            <person name="Robertson L."/>
            <person name="Ambridge K."/>
            <person name="Leongamornlert D."/>
            <person name="McGuire S."/>
            <person name="Gilderthorp R."/>
            <person name="Griffiths C."/>
            <person name="Manthravadi D."/>
            <person name="Nichol S."/>
            <person name="Barker G."/>
            <person name="Whitehead S."/>
            <person name="Kay M."/>
            <person name="Brown J."/>
            <person name="Murnane C."/>
            <person name="Gray E."/>
            <person name="Humphries M."/>
            <person name="Sycamore N."/>
            <person name="Barker D."/>
            <person name="Saunders D."/>
            <person name="Wallis J."/>
            <person name="Babbage A."/>
            <person name="Hammond S."/>
            <person name="Mashreghi-Mohammadi M."/>
            <person name="Barr L."/>
            <person name="Martin S."/>
            <person name="Wray P."/>
            <person name="Ellington A."/>
            <person name="Matthews N."/>
            <person name="Ellwood M."/>
            <person name="Woodmansey R."/>
            <person name="Clark G."/>
            <person name="Cooper J."/>
            <person name="Tromans A."/>
            <person name="Grafham D."/>
            <person name="Skuce C."/>
            <person name="Pandian R."/>
            <person name="Andrews R."/>
            <person name="Harrison E."/>
            <person name="Kimberley A."/>
            <person name="Garnett J."/>
            <person name="Fosker N."/>
            <person name="Hall R."/>
            <person name="Garner P."/>
            <person name="Kelly D."/>
            <person name="Bird C."/>
            <person name="Palmer S."/>
            <person name="Gehring I."/>
            <person name="Berger A."/>
            <person name="Dooley C.M."/>
            <person name="Ersan-Urun Z."/>
            <person name="Eser C."/>
            <person name="Geiger H."/>
            <person name="Geisler M."/>
            <person name="Karotki L."/>
            <person name="Kirn A."/>
            <person name="Konantz J."/>
            <person name="Konantz M."/>
            <person name="Oberlander M."/>
            <person name="Rudolph-Geiger S."/>
            <person name="Teucke M."/>
            <person name="Lanz C."/>
            <person name="Raddatz G."/>
            <person name="Osoegawa K."/>
            <person name="Zhu B."/>
            <person name="Rapp A."/>
            <person name="Widaa S."/>
            <person name="Langford C."/>
            <person name="Yang F."/>
            <person name="Schuster S.C."/>
            <person name="Carter N.P."/>
            <person name="Harrow J."/>
            <person name="Ning Z."/>
            <person name="Herrero J."/>
            <person name="Searle S.M."/>
            <person name="Enright A."/>
            <person name="Geisler R."/>
            <person name="Plasterk R.H."/>
            <person name="Lee C."/>
            <person name="Westerfield M."/>
            <person name="de Jong P.J."/>
            <person name="Zon L.I."/>
            <person name="Postlethwait J.H."/>
            <person name="Nusslein-Volhard C."/>
            <person name="Hubbard T.J."/>
            <person name="Roest Crollius H."/>
            <person name="Rogers J."/>
            <person name="Stemple D.L."/>
        </authorList>
    </citation>
    <scope>NUCLEOTIDE SEQUENCE [LARGE SCALE GENOMIC DNA]</scope>
</reference>
<reference evidence="7" key="2">
    <citation type="submission" date="2003-07" db="EMBL/GenBank/DDBJ databases">
        <authorList>
            <consortium name="NIH - Zebrafish Gene Collection (ZGC) project"/>
        </authorList>
    </citation>
    <scope>NUCLEOTIDE SEQUENCE [LARGE SCALE MRNA]</scope>
</reference>
<reference evidence="6" key="3">
    <citation type="journal article" date="2020" name="Development">
        <title>Prdm8 regulates pMN progenitor specification for motor neuron and oligodendrocyte fates by modulating the Shh signaling response.</title>
        <authorList>
            <person name="Scott K."/>
            <person name="O'Rourke R."/>
            <person name="Gillen A."/>
            <person name="Appel B."/>
        </authorList>
    </citation>
    <scope>FUNCTION</scope>
    <scope>TISSUE SPECIFICITY</scope>
</reference>
<evidence type="ECO:0000250" key="1">
    <source>
        <dbReference type="UniProtKB" id="Q5HZG9"/>
    </source>
</evidence>
<evidence type="ECO:0000255" key="2">
    <source>
        <dbReference type="PROSITE-ProRule" id="PRU00042"/>
    </source>
</evidence>
<evidence type="ECO:0000255" key="3">
    <source>
        <dbReference type="PROSITE-ProRule" id="PRU00190"/>
    </source>
</evidence>
<evidence type="ECO:0000256" key="4">
    <source>
        <dbReference type="SAM" id="MobiDB-lite"/>
    </source>
</evidence>
<evidence type="ECO:0000269" key="5">
    <source>
    </source>
</evidence>
<evidence type="ECO:0000305" key="6"/>
<evidence type="ECO:0000312" key="7">
    <source>
        <dbReference type="EMBL" id="AAH55201.1"/>
    </source>
</evidence>
<evidence type="ECO:0000312" key="8">
    <source>
        <dbReference type="Proteomes" id="UP000000437"/>
    </source>
</evidence>
<evidence type="ECO:0000312" key="9">
    <source>
        <dbReference type="ZFIN" id="ZDB-GENE-040426-2747"/>
    </source>
</evidence>
<name>ZN488_DANRE</name>
<sequence length="502" mass="56921">MEHSIFPRSLWTNDSKILHHHVADFFSSVQVTQDIPAGTSFGPCVLHNTFYDTIAFIALKSFDKRNKSYVFRVDPEAMKGSPLVVPWLRLVQAAMSEEDQNTEAYLKGGQLHFRTIRDVKEGEELLVWYDEELSHLLGFRDIKAKALTDGYTCTRCGQAFKNENPFLAHCRFLCTQEKVDIIRPINQQKPEVKRHRKVIDFHNIARDLEDKMNTSSFEDTTILRKRKQEPFLTPKSKKTVLLEKTNITNESNTTNANKDCRAFRDLSEPTDNAQTNESKISKNSAFTEVRKAPEPSNPEKSSRDIMAPEVGLQSNCSAFSFVVPKSARSEQKSAFCEPSKRALAEAQNPSPPDTDNSLDSFKSKSSLGYRNVLASHLFPTDLAGSHSGGGMSAPLTSGGSYYYAPEHWTRAIGGQLQSTSSLTLLPPTFTPLGVSVQNWCAKCNLSFRMTSDLVFHMRSHHKKEFAAEAQVRRRREEKLTCPICHEYFRERHHLSRHMTSHN</sequence>
<keyword id="KW-0238">DNA-binding</keyword>
<keyword id="KW-0479">Metal-binding</keyword>
<keyword id="KW-0489">Methyltransferase</keyword>
<keyword id="KW-0524">Neurogenesis</keyword>
<keyword id="KW-0539">Nucleus</keyword>
<keyword id="KW-1185">Reference proteome</keyword>
<keyword id="KW-0677">Repeat</keyword>
<keyword id="KW-0678">Repressor</keyword>
<keyword id="KW-0804">Transcription</keyword>
<keyword id="KW-0805">Transcription regulation</keyword>
<keyword id="KW-0808">Transferase</keyword>
<keyword id="KW-0862">Zinc</keyword>
<keyword id="KW-0863">Zinc-finger</keyword>